<feature type="chain" id="PRO_0000214298" description="Ion-translocating oxidoreductase complex subunit A">
    <location>
        <begin position="1"/>
        <end position="193"/>
    </location>
</feature>
<feature type="transmembrane region" description="Helical" evidence="1">
    <location>
        <begin position="5"/>
        <end position="25"/>
    </location>
</feature>
<feature type="transmembrane region" description="Helical" evidence="1">
    <location>
        <begin position="47"/>
        <end position="67"/>
    </location>
</feature>
<feature type="transmembrane region" description="Helical" evidence="1">
    <location>
        <begin position="72"/>
        <end position="92"/>
    </location>
</feature>
<feature type="transmembrane region" description="Helical" evidence="1">
    <location>
        <begin position="102"/>
        <end position="122"/>
    </location>
</feature>
<feature type="transmembrane region" description="Helical" evidence="1">
    <location>
        <begin position="134"/>
        <end position="154"/>
    </location>
</feature>
<feature type="transmembrane region" description="Helical" evidence="1">
    <location>
        <begin position="171"/>
        <end position="191"/>
    </location>
</feature>
<evidence type="ECO:0000255" key="1">
    <source>
        <dbReference type="HAMAP-Rule" id="MF_00459"/>
    </source>
</evidence>
<organism>
    <name type="scientific">Salmonella typhi</name>
    <dbReference type="NCBI Taxonomy" id="90370"/>
    <lineage>
        <taxon>Bacteria</taxon>
        <taxon>Pseudomonadati</taxon>
        <taxon>Pseudomonadota</taxon>
        <taxon>Gammaproteobacteria</taxon>
        <taxon>Enterobacterales</taxon>
        <taxon>Enterobacteriaceae</taxon>
        <taxon>Salmonella</taxon>
    </lineage>
</organism>
<protein>
    <recommendedName>
        <fullName evidence="1">Ion-translocating oxidoreductase complex subunit A</fullName>
        <ecNumber evidence="1">7.-.-.-</ecNumber>
    </recommendedName>
    <alternativeName>
        <fullName evidence="1">Rsx electron transport complex subunit A</fullName>
    </alternativeName>
</protein>
<comment type="function">
    <text evidence="1">Part of a membrane-bound complex that couples electron transfer with translocation of ions across the membrane. Required to maintain the reduced state of SoxR.</text>
</comment>
<comment type="subunit">
    <text evidence="1">The complex is composed of six subunits: RsxA, RsxB, RsxC, RsxD, RsxE and RsxG.</text>
</comment>
<comment type="subcellular location">
    <subcellularLocation>
        <location evidence="1">Cell inner membrane</location>
        <topology evidence="1">Multi-pass membrane protein</topology>
    </subcellularLocation>
</comment>
<comment type="similarity">
    <text evidence="1">Belongs to the NqrDE/RnfAE family.</text>
</comment>
<gene>
    <name evidence="1" type="primary">rsxA</name>
    <name type="ordered locus">STY1663</name>
    <name type="ordered locus">t1327</name>
</gene>
<name>RSXA_SALTI</name>
<proteinExistence type="inferred from homology"/>
<dbReference type="EC" id="7.-.-.-" evidence="1"/>
<dbReference type="EMBL" id="AL513382">
    <property type="protein sequence ID" value="CAD01908.1"/>
    <property type="molecule type" value="Genomic_DNA"/>
</dbReference>
<dbReference type="EMBL" id="AE014613">
    <property type="protein sequence ID" value="AAO68977.1"/>
    <property type="molecule type" value="Genomic_DNA"/>
</dbReference>
<dbReference type="RefSeq" id="NP_456071.1">
    <property type="nucleotide sequence ID" value="NC_003198.1"/>
</dbReference>
<dbReference type="RefSeq" id="WP_000133179.1">
    <property type="nucleotide sequence ID" value="NZ_WSUR01000011.1"/>
</dbReference>
<dbReference type="SMR" id="P65543"/>
<dbReference type="STRING" id="220341.gene:17585598"/>
<dbReference type="GeneID" id="66755900"/>
<dbReference type="KEGG" id="stt:t1327"/>
<dbReference type="KEGG" id="sty:STY1663"/>
<dbReference type="PATRIC" id="fig|220341.7.peg.1673"/>
<dbReference type="eggNOG" id="COG4657">
    <property type="taxonomic scope" value="Bacteria"/>
</dbReference>
<dbReference type="HOGENOM" id="CLU_095255_1_0_6"/>
<dbReference type="OMA" id="ILGLCPF"/>
<dbReference type="OrthoDB" id="9803631at2"/>
<dbReference type="Proteomes" id="UP000000541">
    <property type="component" value="Chromosome"/>
</dbReference>
<dbReference type="Proteomes" id="UP000002670">
    <property type="component" value="Chromosome"/>
</dbReference>
<dbReference type="GO" id="GO:0005886">
    <property type="term" value="C:plasma membrane"/>
    <property type="evidence" value="ECO:0007669"/>
    <property type="project" value="UniProtKB-SubCell"/>
</dbReference>
<dbReference type="GO" id="GO:0022900">
    <property type="term" value="P:electron transport chain"/>
    <property type="evidence" value="ECO:0007669"/>
    <property type="project" value="UniProtKB-UniRule"/>
</dbReference>
<dbReference type="HAMAP" id="MF_00459">
    <property type="entry name" value="RsxA_RnfA"/>
    <property type="match status" value="1"/>
</dbReference>
<dbReference type="InterPro" id="IPR011293">
    <property type="entry name" value="Ion_transpt_RnfA/RsxA"/>
</dbReference>
<dbReference type="InterPro" id="IPR003667">
    <property type="entry name" value="NqrDE/RnfAE"/>
</dbReference>
<dbReference type="InterPro" id="IPR050133">
    <property type="entry name" value="NqrDE/RnfAE_oxidrdctase"/>
</dbReference>
<dbReference type="NCBIfam" id="NF003481">
    <property type="entry name" value="PRK05151.1"/>
    <property type="match status" value="1"/>
</dbReference>
<dbReference type="NCBIfam" id="TIGR01943">
    <property type="entry name" value="rnfA"/>
    <property type="match status" value="1"/>
</dbReference>
<dbReference type="PANTHER" id="PTHR30335">
    <property type="entry name" value="INTEGRAL MEMBRANE PROTEIN OF SOXR-REDUCING COMPLEX"/>
    <property type="match status" value="1"/>
</dbReference>
<dbReference type="PANTHER" id="PTHR30335:SF0">
    <property type="entry name" value="ION-TRANSLOCATING OXIDOREDUCTASE COMPLEX SUBUNIT A"/>
    <property type="match status" value="1"/>
</dbReference>
<dbReference type="Pfam" id="PF02508">
    <property type="entry name" value="Rnf-Nqr"/>
    <property type="match status" value="1"/>
</dbReference>
<dbReference type="PIRSF" id="PIRSF006102">
    <property type="entry name" value="NQR_DE"/>
    <property type="match status" value="1"/>
</dbReference>
<keyword id="KW-0997">Cell inner membrane</keyword>
<keyword id="KW-1003">Cell membrane</keyword>
<keyword id="KW-0249">Electron transport</keyword>
<keyword id="KW-0472">Membrane</keyword>
<keyword id="KW-1278">Translocase</keyword>
<keyword id="KW-0812">Transmembrane</keyword>
<keyword id="KW-1133">Transmembrane helix</keyword>
<keyword id="KW-0813">Transport</keyword>
<accession>P65543</accession>
<accession>Q8XH01</accession>
<reference key="1">
    <citation type="journal article" date="2001" name="Nature">
        <title>Complete genome sequence of a multiple drug resistant Salmonella enterica serovar Typhi CT18.</title>
        <authorList>
            <person name="Parkhill J."/>
            <person name="Dougan G."/>
            <person name="James K.D."/>
            <person name="Thomson N.R."/>
            <person name="Pickard D."/>
            <person name="Wain J."/>
            <person name="Churcher C.M."/>
            <person name="Mungall K.L."/>
            <person name="Bentley S.D."/>
            <person name="Holden M.T.G."/>
            <person name="Sebaihia M."/>
            <person name="Baker S."/>
            <person name="Basham D."/>
            <person name="Brooks K."/>
            <person name="Chillingworth T."/>
            <person name="Connerton P."/>
            <person name="Cronin A."/>
            <person name="Davis P."/>
            <person name="Davies R.M."/>
            <person name="Dowd L."/>
            <person name="White N."/>
            <person name="Farrar J."/>
            <person name="Feltwell T."/>
            <person name="Hamlin N."/>
            <person name="Haque A."/>
            <person name="Hien T.T."/>
            <person name="Holroyd S."/>
            <person name="Jagels K."/>
            <person name="Krogh A."/>
            <person name="Larsen T.S."/>
            <person name="Leather S."/>
            <person name="Moule S."/>
            <person name="O'Gaora P."/>
            <person name="Parry C."/>
            <person name="Quail M.A."/>
            <person name="Rutherford K.M."/>
            <person name="Simmonds M."/>
            <person name="Skelton J."/>
            <person name="Stevens K."/>
            <person name="Whitehead S."/>
            <person name="Barrell B.G."/>
        </authorList>
    </citation>
    <scope>NUCLEOTIDE SEQUENCE [LARGE SCALE GENOMIC DNA]</scope>
    <source>
        <strain>CT18</strain>
    </source>
</reference>
<reference key="2">
    <citation type="journal article" date="2003" name="J. Bacteriol.">
        <title>Comparative genomics of Salmonella enterica serovar Typhi strains Ty2 and CT18.</title>
        <authorList>
            <person name="Deng W."/>
            <person name="Liou S.-R."/>
            <person name="Plunkett G. III"/>
            <person name="Mayhew G.F."/>
            <person name="Rose D.J."/>
            <person name="Burland V."/>
            <person name="Kodoyianni V."/>
            <person name="Schwartz D.C."/>
            <person name="Blattner F.R."/>
        </authorList>
    </citation>
    <scope>NUCLEOTIDE SEQUENCE [LARGE SCALE GENOMIC DNA]</scope>
    <source>
        <strain>ATCC 700931 / Ty2</strain>
    </source>
</reference>
<sequence>MTDYLLLFVGTVLVNNFVLVKFLGLCPFMGVSKKLETAMGMGLATTFVMTLASICAWLIDTWILIPLDLIYLRTLAFILVIAVVVQFTEMVVRKTSPALYRLLGIFLPLITTNCAVLGVALLNINLGHHFLQSALYGFSAAVGFSLVMVLFAAIRERLAVADVPAPFRGNAIALITAGLMSLAFMGFSGLVKL</sequence>